<reference key="1">
    <citation type="journal article" date="1999" name="DNA Res.">
        <title>Complete genome sequence of an aerobic hyper-thermophilic crenarchaeon, Aeropyrum pernix K1.</title>
        <authorList>
            <person name="Kawarabayasi Y."/>
            <person name="Hino Y."/>
            <person name="Horikawa H."/>
            <person name="Yamazaki S."/>
            <person name="Haikawa Y."/>
            <person name="Jin-no K."/>
            <person name="Takahashi M."/>
            <person name="Sekine M."/>
            <person name="Baba S."/>
            <person name="Ankai A."/>
            <person name="Kosugi H."/>
            <person name="Hosoyama A."/>
            <person name="Fukui S."/>
            <person name="Nagai Y."/>
            <person name="Nishijima K."/>
            <person name="Nakazawa H."/>
            <person name="Takamiya M."/>
            <person name="Masuda S."/>
            <person name="Funahashi T."/>
            <person name="Tanaka T."/>
            <person name="Kudoh Y."/>
            <person name="Yamazaki J."/>
            <person name="Kushida N."/>
            <person name="Oguchi A."/>
            <person name="Aoki K."/>
            <person name="Kubota K."/>
            <person name="Nakamura Y."/>
            <person name="Nomura N."/>
            <person name="Sako Y."/>
            <person name="Kikuchi H."/>
        </authorList>
    </citation>
    <scope>NUCLEOTIDE SEQUENCE [LARGE SCALE GENOMIC DNA]</scope>
    <source>
        <strain>ATCC 700893 / DSM 11879 / JCM 9820 / NBRC 100138 / K1</strain>
    </source>
</reference>
<keyword id="KW-0067">ATP-binding</keyword>
<keyword id="KW-0547">Nucleotide-binding</keyword>
<keyword id="KW-1185">Reference proteome</keyword>
<sequence>MVDRVKTGIPGMDDILYGGIPRRNVVLLSGGPGTGKSIFSYQYLWNGLREGEPGVFVALEEHPVQVRINMAQFGWDVREYERQGLFAVVDAFTSGIGEAAKKERYVVTDPEDVGLLIDVLKEAIRDVGAKRVAVDSVSTLYLAKPVLARRTVMLLKRVLSGLGTTSILVSQVSVTERGFGGPGVEHAADGIIRLDLDEVDGELVRSLIIWKMRGTKHSMRRHPFEITDKGIIVYPDKVVRIGRRVSIE</sequence>
<protein>
    <recommendedName>
        <fullName evidence="1">UPF0273 protein APE_1505.1</fullName>
    </recommendedName>
</protein>
<accession>Q9YBU4</accession>
<evidence type="ECO:0000255" key="1">
    <source>
        <dbReference type="HAMAP-Rule" id="MF_01076"/>
    </source>
</evidence>
<gene>
    <name type="ordered locus">APE_1505.1</name>
</gene>
<feature type="chain" id="PRO_0000184584" description="UPF0273 protein APE_1505.1">
    <location>
        <begin position="1"/>
        <end position="248"/>
    </location>
</feature>
<feature type="domain" description="KaiC" evidence="1">
    <location>
        <begin position="3"/>
        <end position="247"/>
    </location>
</feature>
<feature type="binding site" evidence="1">
    <location>
        <begin position="30"/>
        <end position="37"/>
    </location>
    <ligand>
        <name>ATP</name>
        <dbReference type="ChEBI" id="CHEBI:30616"/>
    </ligand>
</feature>
<organism>
    <name type="scientific">Aeropyrum pernix (strain ATCC 700893 / DSM 11879 / JCM 9820 / NBRC 100138 / K1)</name>
    <dbReference type="NCBI Taxonomy" id="272557"/>
    <lineage>
        <taxon>Archaea</taxon>
        <taxon>Thermoproteota</taxon>
        <taxon>Thermoprotei</taxon>
        <taxon>Desulfurococcales</taxon>
        <taxon>Desulfurococcaceae</taxon>
        <taxon>Aeropyrum</taxon>
    </lineage>
</organism>
<name>Y1505_AERPE</name>
<comment type="similarity">
    <text evidence="1">Belongs to the UPF0273 family.</text>
</comment>
<proteinExistence type="inferred from homology"/>
<dbReference type="EMBL" id="BA000002">
    <property type="protein sequence ID" value="BAA80504.2"/>
    <property type="molecule type" value="Genomic_DNA"/>
</dbReference>
<dbReference type="PIR" id="B72631">
    <property type="entry name" value="B72631"/>
</dbReference>
<dbReference type="RefSeq" id="WP_010866413.1">
    <property type="nucleotide sequence ID" value="NC_000854.2"/>
</dbReference>
<dbReference type="SMR" id="Q9YBU4"/>
<dbReference type="STRING" id="272557.APE_1505.1"/>
<dbReference type="EnsemblBacteria" id="BAA80504">
    <property type="protein sequence ID" value="BAA80504"/>
    <property type="gene ID" value="APE_1505.1"/>
</dbReference>
<dbReference type="GeneID" id="1446057"/>
<dbReference type="KEGG" id="ape:APE_1505.1"/>
<dbReference type="PATRIC" id="fig|272557.25.peg.1016"/>
<dbReference type="eggNOG" id="arCOG01171">
    <property type="taxonomic scope" value="Archaea"/>
</dbReference>
<dbReference type="Proteomes" id="UP000002518">
    <property type="component" value="Chromosome"/>
</dbReference>
<dbReference type="GO" id="GO:0005524">
    <property type="term" value="F:ATP binding"/>
    <property type="evidence" value="ECO:0007669"/>
    <property type="project" value="UniProtKB-UniRule"/>
</dbReference>
<dbReference type="CDD" id="cd19486">
    <property type="entry name" value="KaiC_arch"/>
    <property type="match status" value="1"/>
</dbReference>
<dbReference type="Gene3D" id="3.40.50.300">
    <property type="entry name" value="P-loop containing nucleotide triphosphate hydrolases"/>
    <property type="match status" value="1"/>
</dbReference>
<dbReference type="HAMAP" id="MF_01076">
    <property type="entry name" value="UPF0273"/>
    <property type="match status" value="1"/>
</dbReference>
<dbReference type="InterPro" id="IPR014774">
    <property type="entry name" value="KaiC-like_dom"/>
</dbReference>
<dbReference type="InterPro" id="IPR010624">
    <property type="entry name" value="KaiC_dom"/>
</dbReference>
<dbReference type="InterPro" id="IPR027417">
    <property type="entry name" value="P-loop_NTPase"/>
</dbReference>
<dbReference type="InterPro" id="IPR022475">
    <property type="entry name" value="UPF0273_KaiC-like"/>
</dbReference>
<dbReference type="NCBIfam" id="TIGR03877">
    <property type="entry name" value="thermo_KaiC_1"/>
    <property type="match status" value="1"/>
</dbReference>
<dbReference type="PANTHER" id="PTHR43637">
    <property type="entry name" value="UPF0273 PROTEIN TM_0370"/>
    <property type="match status" value="1"/>
</dbReference>
<dbReference type="PANTHER" id="PTHR43637:SF1">
    <property type="entry name" value="UPF0273 PROTEIN TM_0370"/>
    <property type="match status" value="1"/>
</dbReference>
<dbReference type="Pfam" id="PF06745">
    <property type="entry name" value="ATPase"/>
    <property type="match status" value="1"/>
</dbReference>
<dbReference type="PRINTS" id="PR01874">
    <property type="entry name" value="DNAREPAIRADA"/>
</dbReference>
<dbReference type="SUPFAM" id="SSF52540">
    <property type="entry name" value="P-loop containing nucleoside triphosphate hydrolases"/>
    <property type="match status" value="1"/>
</dbReference>
<dbReference type="PROSITE" id="PS51146">
    <property type="entry name" value="KAIC"/>
    <property type="match status" value="1"/>
</dbReference>